<dbReference type="EC" id="7.2.1.3" evidence="4"/>
<dbReference type="EMBL" id="AK040692">
    <property type="protein sequence ID" value="BAE20585.1"/>
    <property type="molecule type" value="mRNA"/>
</dbReference>
<dbReference type="EMBL" id="AK139533">
    <property type="protein sequence ID" value="BAE24053.1"/>
    <property type="molecule type" value="mRNA"/>
</dbReference>
<dbReference type="EMBL" id="AK160179">
    <property type="protein sequence ID" value="BAE35677.1"/>
    <property type="molecule type" value="mRNA"/>
</dbReference>
<dbReference type="EMBL" id="AK168841">
    <property type="protein sequence ID" value="BAE40664.1"/>
    <property type="molecule type" value="mRNA"/>
</dbReference>
<dbReference type="EMBL" id="AK169729">
    <property type="protein sequence ID" value="BAE41333.1"/>
    <property type="molecule type" value="mRNA"/>
</dbReference>
<dbReference type="EMBL" id="AK170911">
    <property type="protein sequence ID" value="BAE42109.1"/>
    <property type="molecule type" value="mRNA"/>
</dbReference>
<dbReference type="EMBL" id="AK172638">
    <property type="protein sequence ID" value="BAE43109.1"/>
    <property type="molecule type" value="mRNA"/>
</dbReference>
<dbReference type="EMBL" id="BC065078">
    <property type="protein sequence ID" value="AAH65078.1"/>
    <property type="molecule type" value="mRNA"/>
</dbReference>
<dbReference type="CCDS" id="CCDS29582.1">
    <molecule id="Q6P1H1-1"/>
</dbReference>
<dbReference type="CCDS" id="CCDS89344.1">
    <molecule id="Q6P1H1-2"/>
</dbReference>
<dbReference type="RefSeq" id="NP_001268993.1">
    <molecule id="Q6P1H1-1"/>
    <property type="nucleotide sequence ID" value="NM_001282064.1"/>
</dbReference>
<dbReference type="RefSeq" id="NP_001268994.1">
    <molecule id="Q6P1H1-2"/>
    <property type="nucleotide sequence ID" value="NM_001282065.1"/>
</dbReference>
<dbReference type="RefSeq" id="NP_001268996.1">
    <molecule id="Q6P1H1-1"/>
    <property type="nucleotide sequence ID" value="NM_001282067.2"/>
</dbReference>
<dbReference type="RefSeq" id="NP_001349359.1">
    <molecule id="Q6P1H1-1"/>
    <property type="nucleotide sequence ID" value="NM_001362430.1"/>
</dbReference>
<dbReference type="RefSeq" id="NP_001349360.1">
    <molecule id="Q6P1H1-1"/>
    <property type="nucleotide sequence ID" value="NM_001362431.1"/>
</dbReference>
<dbReference type="RefSeq" id="NP_958739.1">
    <molecule id="Q6P1H1-1"/>
    <property type="nucleotide sequence ID" value="NM_201351.2"/>
</dbReference>
<dbReference type="RefSeq" id="XP_006527003.1">
    <molecule id="Q6P1H1-2"/>
    <property type="nucleotide sequence ID" value="XM_006526940.4"/>
</dbReference>
<dbReference type="RefSeq" id="XP_017173639.1">
    <property type="nucleotide sequence ID" value="XM_017318150.1"/>
</dbReference>
<dbReference type="RefSeq" id="XP_017173640.1">
    <property type="nucleotide sequence ID" value="XM_017318151.1"/>
</dbReference>
<dbReference type="RefSeq" id="XP_030106742.1">
    <molecule id="Q6P1H1-1"/>
    <property type="nucleotide sequence ID" value="XM_030250882.2"/>
</dbReference>
<dbReference type="RefSeq" id="XP_030106743.1">
    <molecule id="Q6P1H1-1"/>
    <property type="nucleotide sequence ID" value="XM_030250883.2"/>
</dbReference>
<dbReference type="SMR" id="Q6P1H1"/>
<dbReference type="FunCoup" id="Q6P1H1">
    <property type="interactions" value="1221"/>
</dbReference>
<dbReference type="STRING" id="10090.ENSMUSP00000158186"/>
<dbReference type="TCDB" id="5.B.2.1.5">
    <property type="family name" value="the eukaryotic cytochrome b561 (cytb561) family"/>
</dbReference>
<dbReference type="PaxDb" id="10090-ENSMUSP00000130680"/>
<dbReference type="ProteomicsDB" id="283992">
    <molecule id="Q6P1H1-1"/>
</dbReference>
<dbReference type="ProteomicsDB" id="283993">
    <molecule id="Q6P1H1-2"/>
</dbReference>
<dbReference type="ProteomicsDB" id="283994">
    <molecule id="Q6P1H1-3"/>
</dbReference>
<dbReference type="Antibodypedia" id="52925">
    <property type="antibodies" value="9 antibodies from 6 providers"/>
</dbReference>
<dbReference type="Ensembl" id="ENSMUST00000168445.2">
    <molecule id="Q6P1H1-1"/>
    <property type="protein sequence ID" value="ENSMUSP00000130680.2"/>
    <property type="gene ID" value="ENSMUSG00000034445.9"/>
</dbReference>
<dbReference type="Ensembl" id="ENSMUST00000235271.2">
    <molecule id="Q6P1H1-1"/>
    <property type="protein sequence ID" value="ENSMUSP00000157672.2"/>
    <property type="gene ID" value="ENSMUSG00000034445.9"/>
</dbReference>
<dbReference type="Ensembl" id="ENSMUST00000236352.2">
    <molecule id="Q6P1H1-3"/>
    <property type="protein sequence ID" value="ENSMUSP00000157892.2"/>
    <property type="gene ID" value="ENSMUSG00000034445.9"/>
</dbReference>
<dbReference type="Ensembl" id="ENSMUST00000237581.2">
    <molecule id="Q6P1H1-1"/>
    <property type="protein sequence ID" value="ENSMUSP00000157884.2"/>
    <property type="gene ID" value="ENSMUSG00000034445.9"/>
</dbReference>
<dbReference type="Ensembl" id="ENSMUST00000237641.2">
    <molecule id="Q6P1H1-2"/>
    <property type="protein sequence ID" value="ENSMUSP00000157602.2"/>
    <property type="gene ID" value="ENSMUSG00000034445.9"/>
</dbReference>
<dbReference type="Ensembl" id="ENSMUST00000237814.2">
    <molecule id="Q6P1H1-1"/>
    <property type="protein sequence ID" value="ENSMUSP00000158186.2"/>
    <property type="gene ID" value="ENSMUSG00000034445.9"/>
</dbReference>
<dbReference type="GeneID" id="225912"/>
<dbReference type="KEGG" id="mmu:225912"/>
<dbReference type="UCSC" id="uc008gqg.2">
    <molecule id="Q6P1H1-1"/>
    <property type="organism name" value="mouse"/>
</dbReference>
<dbReference type="UCSC" id="uc008gqi.2">
    <molecule id="Q6P1H1-2"/>
    <property type="organism name" value="mouse"/>
</dbReference>
<dbReference type="AGR" id="MGI:2686925"/>
<dbReference type="CTD" id="220002"/>
<dbReference type="MGI" id="MGI:2686925">
    <property type="gene designation" value="Cyb561a3"/>
</dbReference>
<dbReference type="VEuPathDB" id="HostDB:ENSMUSG00000034445"/>
<dbReference type="eggNOG" id="KOG1619">
    <property type="taxonomic scope" value="Eukaryota"/>
</dbReference>
<dbReference type="GeneTree" id="ENSGT00950000183197"/>
<dbReference type="HOGENOM" id="CLU_069712_1_3_1"/>
<dbReference type="InParanoid" id="Q6P1H1"/>
<dbReference type="OMA" id="LSTIYWM"/>
<dbReference type="PhylomeDB" id="Q6P1H1"/>
<dbReference type="TreeFam" id="TF314222"/>
<dbReference type="BRENDA" id="7.2.1.3">
    <property type="organism ID" value="3474"/>
</dbReference>
<dbReference type="BioGRID-ORCS" id="225912">
    <property type="hits" value="2 hits in 77 CRISPR screens"/>
</dbReference>
<dbReference type="ChiTaRS" id="Cyb561a3">
    <property type="organism name" value="mouse"/>
</dbReference>
<dbReference type="PRO" id="PR:Q6P1H1"/>
<dbReference type="Proteomes" id="UP000000589">
    <property type="component" value="Chromosome 19"/>
</dbReference>
<dbReference type="RNAct" id="Q6P1H1">
    <property type="molecule type" value="protein"/>
</dbReference>
<dbReference type="Bgee" id="ENSMUSG00000034445">
    <property type="expression patterns" value="Expressed in spleen and 229 other cell types or tissues"/>
</dbReference>
<dbReference type="ExpressionAtlas" id="Q6P1H1">
    <property type="expression patterns" value="baseline and differential"/>
</dbReference>
<dbReference type="GO" id="GO:0031902">
    <property type="term" value="C:late endosome membrane"/>
    <property type="evidence" value="ECO:0000314"/>
    <property type="project" value="UniProtKB"/>
</dbReference>
<dbReference type="GO" id="GO:0005765">
    <property type="term" value="C:lysosomal membrane"/>
    <property type="evidence" value="ECO:0000314"/>
    <property type="project" value="UniProtKB"/>
</dbReference>
<dbReference type="GO" id="GO:0005764">
    <property type="term" value="C:lysosome"/>
    <property type="evidence" value="ECO:0000314"/>
    <property type="project" value="MGI"/>
</dbReference>
<dbReference type="GO" id="GO:0005730">
    <property type="term" value="C:nucleolus"/>
    <property type="evidence" value="ECO:0007669"/>
    <property type="project" value="Ensembl"/>
</dbReference>
<dbReference type="GO" id="GO:0046872">
    <property type="term" value="F:metal ion binding"/>
    <property type="evidence" value="ECO:0007669"/>
    <property type="project" value="UniProtKB-KW"/>
</dbReference>
<dbReference type="GO" id="GO:0140571">
    <property type="term" value="F:transmembrane ascorbate ferrireductase activity"/>
    <property type="evidence" value="ECO:0000314"/>
    <property type="project" value="UniProtKB"/>
</dbReference>
<dbReference type="GO" id="GO:0006879">
    <property type="term" value="P:intracellular iron ion homeostasis"/>
    <property type="evidence" value="ECO:0000314"/>
    <property type="project" value="UniProtKB"/>
</dbReference>
<dbReference type="FunFam" id="1.20.120.1770:FF:000001">
    <property type="entry name" value="Cytochrome b reductase 1"/>
    <property type="match status" value="1"/>
</dbReference>
<dbReference type="Gene3D" id="1.20.120.1770">
    <property type="match status" value="1"/>
</dbReference>
<dbReference type="InterPro" id="IPR043205">
    <property type="entry name" value="CYB561/CYBRD1-like"/>
</dbReference>
<dbReference type="InterPro" id="IPR006593">
    <property type="entry name" value="Cyt_b561/ferric_Rdtase_TM"/>
</dbReference>
<dbReference type="PANTHER" id="PTHR10106">
    <property type="entry name" value="CYTOCHROME B561-RELATED"/>
    <property type="match status" value="1"/>
</dbReference>
<dbReference type="PANTHER" id="PTHR10106:SF38">
    <property type="entry name" value="LYSOSOMAL MEMBRANE ASCORBATE-DEPENDENT FERRIREDUCTASE CYB561A3"/>
    <property type="match status" value="1"/>
</dbReference>
<dbReference type="Pfam" id="PF03188">
    <property type="entry name" value="Cytochrom_B561"/>
    <property type="match status" value="1"/>
</dbReference>
<dbReference type="SMART" id="SM00665">
    <property type="entry name" value="B561"/>
    <property type="match status" value="1"/>
</dbReference>
<dbReference type="PROSITE" id="PS50939">
    <property type="entry name" value="CYTOCHROME_B561"/>
    <property type="match status" value="1"/>
</dbReference>
<comment type="function">
    <text evidence="4 8">Transmembrane reductase that uses ascorbate as an electron donor in the cytoplasm and transfers electrons across membranes to reduce iron cations Fe(3+) into Fe(2+) in the lumen of the late endosome and lysosome (PubMed:16911521). Reduced iron can then be extruded from the late endosome and lysosome to the cytoplasm by divalent metal-specific transporters (Probable). It is therefore most probably involved in endosomal and lysosomal cellular iron homeostasis (Probable).</text>
</comment>
<comment type="catalytic activity">
    <reaction evidence="4">
        <text>Fe(3+)(out) + L-ascorbate(in) = monodehydro-L-ascorbate radical(in) + Fe(2+)(out) + H(+)</text>
        <dbReference type="Rhea" id="RHEA:30403"/>
        <dbReference type="ChEBI" id="CHEBI:15378"/>
        <dbReference type="ChEBI" id="CHEBI:29033"/>
        <dbReference type="ChEBI" id="CHEBI:29034"/>
        <dbReference type="ChEBI" id="CHEBI:38290"/>
        <dbReference type="ChEBI" id="CHEBI:59513"/>
        <dbReference type="EC" id="7.2.1.3"/>
    </reaction>
    <physiologicalReaction direction="left-to-right" evidence="8">
        <dbReference type="Rhea" id="RHEA:30404"/>
    </physiologicalReaction>
</comment>
<comment type="cofactor">
    <cofactor evidence="1">
        <name>heme b</name>
        <dbReference type="ChEBI" id="CHEBI:60344"/>
    </cofactor>
    <text evidence="1">Binds 2 heme b groups non-covalently.</text>
</comment>
<comment type="subunit">
    <text evidence="1">Homodimer.</text>
</comment>
<comment type="subcellular location">
    <subcellularLocation>
        <location evidence="5">Late endosome membrane</location>
        <topology evidence="1">Multi-pass membrane protein</topology>
    </subcellularLocation>
    <subcellularLocation>
        <location evidence="5">Lysosome membrane</location>
        <topology evidence="1">Multi-pass membrane protein</topology>
    </subcellularLocation>
</comment>
<comment type="alternative products">
    <event type="alternative splicing"/>
    <isoform>
        <id>Q6P1H1-1</id>
        <name>1</name>
        <sequence type="displayed"/>
    </isoform>
    <isoform>
        <id>Q6P1H1-2</id>
        <name>2</name>
        <sequence type="described" ref="VSP_030398"/>
    </isoform>
    <isoform>
        <id>Q6P1H1-3</id>
        <name>3</name>
        <sequence type="described" ref="VSP_030399"/>
    </isoform>
</comment>
<comment type="tissue specificity">
    <text evidence="5">Present in lung, spleen, thymus and testis. Present at low level in brain, heart, liver and kidney. Expressed in the alveolar macrophages of the lung, in the white pulp of the spleen, widespread in the thymus, and in the Sertoli cells of the testis (at protein level).</text>
</comment>
<comment type="developmental stage">
    <text evidence="5">At 17.5 dpc, it is primarily expressed in lung, spleen, thymus, testis, placenta, small intestine and stomach.</text>
</comment>
<comment type="PTM">
    <text evidence="5">N-glycosylated.</text>
</comment>
<accession>Q6P1H1</accession>
<accession>Q3TVE2</accession>
<accession>Q3V3G2</accession>
<feature type="chain" id="PRO_0000314839" description="Lysosomal membrane ascorbate-dependent ferrireductase CYB561A3">
    <location>
        <begin position="1"/>
        <end position="242"/>
    </location>
</feature>
<feature type="topological domain" description="Cytoplasmic" evidence="1">
    <location>
        <begin position="1"/>
        <end position="4"/>
    </location>
</feature>
<feature type="transmembrane region" description="Helical" evidence="2">
    <location>
        <begin position="5"/>
        <end position="25"/>
    </location>
</feature>
<feature type="topological domain" description="Lumenal" evidence="1">
    <location>
        <begin position="26"/>
        <end position="40"/>
    </location>
</feature>
<feature type="transmembrane region" description="Helical" evidence="2">
    <location>
        <begin position="41"/>
        <end position="61"/>
    </location>
</feature>
<feature type="topological domain" description="Cytoplasmic" evidence="1">
    <location>
        <begin position="62"/>
        <end position="81"/>
    </location>
</feature>
<feature type="transmembrane region" description="Helical" evidence="2">
    <location>
        <begin position="82"/>
        <end position="102"/>
    </location>
</feature>
<feature type="topological domain" description="Lumenal" evidence="1">
    <location>
        <begin position="103"/>
        <end position="119"/>
    </location>
</feature>
<feature type="transmembrane region" description="Helical" evidence="2">
    <location>
        <begin position="120"/>
        <end position="140"/>
    </location>
</feature>
<feature type="topological domain" description="Cytoplasmic" evidence="1">
    <location>
        <begin position="141"/>
        <end position="154"/>
    </location>
</feature>
<feature type="transmembrane region" description="Helical" evidence="2">
    <location>
        <begin position="155"/>
        <end position="175"/>
    </location>
</feature>
<feature type="topological domain" description="Lumenal" evidence="1">
    <location>
        <begin position="176"/>
        <end position="202"/>
    </location>
</feature>
<feature type="transmembrane region" description="Helical" evidence="2">
    <location>
        <begin position="203"/>
        <end position="223"/>
    </location>
</feature>
<feature type="topological domain" description="Cytoplasmic" evidence="1">
    <location>
        <begin position="224"/>
        <end position="242"/>
    </location>
</feature>
<feature type="domain" description="Cytochrome b561" evidence="3">
    <location>
        <begin position="12"/>
        <end position="219"/>
    </location>
</feature>
<feature type="binding site" description="axial binding residue" evidence="1">
    <location>
        <position position="47"/>
    </location>
    <ligand>
        <name>heme b</name>
        <dbReference type="ChEBI" id="CHEBI:60344"/>
        <label>1</label>
    </ligand>
    <ligandPart>
        <name>Fe</name>
        <dbReference type="ChEBI" id="CHEBI:18248"/>
    </ligandPart>
</feature>
<feature type="binding site" evidence="1">
    <location>
        <position position="67"/>
    </location>
    <ligand>
        <name>heme b</name>
        <dbReference type="ChEBI" id="CHEBI:60344"/>
        <label>2</label>
    </ligand>
</feature>
<feature type="binding site" evidence="1">
    <location>
        <position position="76"/>
    </location>
    <ligand>
        <name>L-ascorbate</name>
        <dbReference type="ChEBI" id="CHEBI:38290"/>
    </ligand>
</feature>
<feature type="binding site" evidence="1">
    <location>
        <position position="80"/>
    </location>
    <ligand>
        <name>L-ascorbate</name>
        <dbReference type="ChEBI" id="CHEBI:38290"/>
    </ligand>
</feature>
<feature type="binding site" description="axial binding residue" evidence="1">
    <location>
        <position position="83"/>
    </location>
    <ligand>
        <name>heme b</name>
        <dbReference type="ChEBI" id="CHEBI:60344"/>
        <label>2</label>
    </ligand>
    <ligandPart>
        <name>Fe</name>
        <dbReference type="ChEBI" id="CHEBI:18248"/>
    </ligandPart>
</feature>
<feature type="binding site" evidence="1">
    <location>
        <begin position="112"/>
        <end position="115"/>
    </location>
    <ligand>
        <name>heme b</name>
        <dbReference type="ChEBI" id="CHEBI:60344"/>
        <label>1</label>
    </ligand>
</feature>
<feature type="binding site" description="axial binding residue" evidence="1">
    <location>
        <position position="117"/>
    </location>
    <ligand>
        <name>heme b</name>
        <dbReference type="ChEBI" id="CHEBI:60344"/>
        <label>1</label>
    </ligand>
    <ligandPart>
        <name>Fe</name>
        <dbReference type="ChEBI" id="CHEBI:18248"/>
    </ligandPart>
</feature>
<feature type="binding site" evidence="1">
    <location>
        <position position="149"/>
    </location>
    <ligand>
        <name>L-ascorbate</name>
        <dbReference type="ChEBI" id="CHEBI:38290"/>
    </ligand>
</feature>
<feature type="binding site" description="axial binding residue" evidence="1">
    <location>
        <position position="156"/>
    </location>
    <ligand>
        <name>heme b</name>
        <dbReference type="ChEBI" id="CHEBI:60344"/>
        <label>2</label>
    </ligand>
    <ligandPart>
        <name>Fe</name>
        <dbReference type="ChEBI" id="CHEBI:18248"/>
    </ligandPart>
</feature>
<feature type="binding site" evidence="1">
    <location>
        <position position="177"/>
    </location>
    <ligand>
        <name>heme b</name>
        <dbReference type="ChEBI" id="CHEBI:60344"/>
        <label>1</label>
    </ligand>
</feature>
<feature type="binding site" evidence="1">
    <location>
        <position position="224"/>
    </location>
    <ligand>
        <name>heme b</name>
        <dbReference type="ChEBI" id="CHEBI:60344"/>
        <label>2</label>
    </ligand>
</feature>
<feature type="splice variant" id="VSP_030398" description="In isoform 2." evidence="6">
    <original>PLLHDRE</original>
    <variation>LLLQLLPGSRPFPVTYMPVPLR</variation>
    <location>
        <begin position="236"/>
        <end position="242"/>
    </location>
</feature>
<feature type="splice variant" id="VSP_030399" description="In isoform 3." evidence="6">
    <original>PLLHDRE</original>
    <variation>DGTCGWRLSPSALMWSPGWNVRMAEDFV</variation>
    <location>
        <begin position="236"/>
        <end position="242"/>
    </location>
</feature>
<feature type="mutagenesis site" description="No effect on transmembrane ascorbate ferrireductase activity." evidence="4">
    <original>D</original>
    <variation>A</variation>
    <location>
        <position position="38"/>
    </location>
</feature>
<feature type="mutagenesis site" description="Decreased transmembrane ascorbate ferrireductase activity. Approximately 45% reduction in enzyme activity." evidence="4">
    <original>F</original>
    <variation>A</variation>
    <location>
        <position position="44"/>
    </location>
</feature>
<feature type="mutagenesis site" description="Loss of transmembrane ascorbate ferrireductase activity." evidence="4">
    <original>H</original>
    <variation>A</variation>
    <location>
        <position position="47"/>
    </location>
</feature>
<feature type="mutagenesis site" description="No effect on transmembrane ascorbate ferrireductase activity." evidence="4">
    <original>P</original>
    <variation>A</variation>
    <location>
        <position position="48"/>
    </location>
</feature>
<feature type="mutagenesis site" description="No effect on transmembrane ascorbate ferrireductase activity." evidence="4">
    <original>M</original>
    <variation>A</variation>
    <location>
        <position position="51"/>
    </location>
</feature>
<feature type="mutagenesis site" description="Loss of transmembrane ascorbate ferrireductase activity." evidence="4">
    <original>Y</original>
    <variation>A</variation>
    <location>
        <position position="66"/>
    </location>
</feature>
<feature type="mutagenesis site" description="Loss of transmembrane ascorbate ferrireductase activity." evidence="4">
    <original>R</original>
    <variation>A</variation>
    <location>
        <position position="67"/>
    </location>
</feature>
<feature type="mutagenesis site" description="Loss of transmembrane ascorbate ferrireductase activity." evidence="4">
    <original>H</original>
    <variation>A</variation>
    <location>
        <position position="83"/>
    </location>
</feature>
<feature type="mutagenesis site" description="No effect on transmembrane ascorbate ferrireductase activity." evidence="4">
    <original>H</original>
    <variation>A</variation>
    <location>
        <position position="105"/>
    </location>
</feature>
<feature type="mutagenesis site" description="No effect on transmembrane ascorbate ferrireductase activity." evidence="4">
    <original>N</original>
    <variation>A</variation>
    <location>
        <position position="106"/>
    </location>
</feature>
<feature type="mutagenesis site" description="Decreased transmembrane ascorbate ferrireductase activity." evidence="4">
    <original>H</original>
    <variation>A</variation>
    <location>
        <position position="112"/>
    </location>
</feature>
<feature type="mutagenesis site" description="Decreased transmembrane ascorbate ferrireductase activity. Approximately 50% reduction in enzyme activity." evidence="4">
    <original>S</original>
    <variation>A</variation>
    <location>
        <position position="115"/>
    </location>
</feature>
<feature type="mutagenesis site" description="Loss of transmembrane ascorbate ferrireductase activity." evidence="4">
    <original>H</original>
    <variation>A</variation>
    <location>
        <position position="117"/>
    </location>
</feature>
<feature type="mutagenesis site" description="No effect on transmembrane ascorbate ferrireductase activity." evidence="4">
    <original>S</original>
    <variation>A</variation>
    <location>
        <position position="118"/>
    </location>
</feature>
<feature type="mutagenesis site" description="Decreased transmembrane ascorbate ferrireductase activity. Approximately 80% reduction in enzyme activity." evidence="4">
    <original>W</original>
    <variation>A</variation>
    <location>
        <position position="119"/>
    </location>
</feature>
<feature type="mutagenesis site" description="Decreased transmembrane ascorbate ferrireductase activity. Approximately 55% reduction in enzyme activity." evidence="4">
    <original>Q</original>
    <variation>A</variation>
    <location>
        <position position="131"/>
    </location>
</feature>
<feature type="mutagenesis site" description="Decreased transmembrane ascorbate ferrireductase activity. Approximately 75% reduction in enzyme activity." evidence="4">
    <original>R</original>
    <variation>A</variation>
    <location>
        <position position="149"/>
    </location>
</feature>
<feature type="mutagenesis site" description="Loss of transmembrane ascorbate ferrireductase activity." evidence="4">
    <original>H</original>
    <variation>A</variation>
    <location>
        <position position="156"/>
    </location>
</feature>
<feature type="mutagenesis site" description="No effect on transmembrane ascorbate ferrireductase activity." evidence="4">
    <original>E</original>
    <variation>A</variation>
    <location>
        <position position="177"/>
    </location>
</feature>
<feature type="mutagenesis site" description="No effect on transmembrane ascorbate ferrireductase activity." evidence="4">
    <original>Y</original>
    <variation>A</variation>
    <location>
        <position position="190"/>
    </location>
</feature>
<feature type="mutagenesis site" description="Decreased transmembrane ascorbate ferrireductase activity. Approximately 75% reduction in enzyme activity." evidence="4">
    <original>E</original>
    <variation>A</variation>
    <location>
        <position position="196"/>
    </location>
</feature>
<name>CYAC3_MOUSE</name>
<gene>
    <name evidence="10" type="primary">Cyb561a3</name>
    <name evidence="10" type="synonym">Cybasc3</name>
</gene>
<reference key="1">
    <citation type="journal article" date="2005" name="Science">
        <title>The transcriptional landscape of the mammalian genome.</title>
        <authorList>
            <person name="Carninci P."/>
            <person name="Kasukawa T."/>
            <person name="Katayama S."/>
            <person name="Gough J."/>
            <person name="Frith M.C."/>
            <person name="Maeda N."/>
            <person name="Oyama R."/>
            <person name="Ravasi T."/>
            <person name="Lenhard B."/>
            <person name="Wells C."/>
            <person name="Kodzius R."/>
            <person name="Shimokawa K."/>
            <person name="Bajic V.B."/>
            <person name="Brenner S.E."/>
            <person name="Batalov S."/>
            <person name="Forrest A.R."/>
            <person name="Zavolan M."/>
            <person name="Davis M.J."/>
            <person name="Wilming L.G."/>
            <person name="Aidinis V."/>
            <person name="Allen J.E."/>
            <person name="Ambesi-Impiombato A."/>
            <person name="Apweiler R."/>
            <person name="Aturaliya R.N."/>
            <person name="Bailey T.L."/>
            <person name="Bansal M."/>
            <person name="Baxter L."/>
            <person name="Beisel K.W."/>
            <person name="Bersano T."/>
            <person name="Bono H."/>
            <person name="Chalk A.M."/>
            <person name="Chiu K.P."/>
            <person name="Choudhary V."/>
            <person name="Christoffels A."/>
            <person name="Clutterbuck D.R."/>
            <person name="Crowe M.L."/>
            <person name="Dalla E."/>
            <person name="Dalrymple B.P."/>
            <person name="de Bono B."/>
            <person name="Della Gatta G."/>
            <person name="di Bernardo D."/>
            <person name="Down T."/>
            <person name="Engstrom P."/>
            <person name="Fagiolini M."/>
            <person name="Faulkner G."/>
            <person name="Fletcher C.F."/>
            <person name="Fukushima T."/>
            <person name="Furuno M."/>
            <person name="Futaki S."/>
            <person name="Gariboldi M."/>
            <person name="Georgii-Hemming P."/>
            <person name="Gingeras T.R."/>
            <person name="Gojobori T."/>
            <person name="Green R.E."/>
            <person name="Gustincich S."/>
            <person name="Harbers M."/>
            <person name="Hayashi Y."/>
            <person name="Hensch T.K."/>
            <person name="Hirokawa N."/>
            <person name="Hill D."/>
            <person name="Huminiecki L."/>
            <person name="Iacono M."/>
            <person name="Ikeo K."/>
            <person name="Iwama A."/>
            <person name="Ishikawa T."/>
            <person name="Jakt M."/>
            <person name="Kanapin A."/>
            <person name="Katoh M."/>
            <person name="Kawasawa Y."/>
            <person name="Kelso J."/>
            <person name="Kitamura H."/>
            <person name="Kitano H."/>
            <person name="Kollias G."/>
            <person name="Krishnan S.P."/>
            <person name="Kruger A."/>
            <person name="Kummerfeld S.K."/>
            <person name="Kurochkin I.V."/>
            <person name="Lareau L.F."/>
            <person name="Lazarevic D."/>
            <person name="Lipovich L."/>
            <person name="Liu J."/>
            <person name="Liuni S."/>
            <person name="McWilliam S."/>
            <person name="Madan Babu M."/>
            <person name="Madera M."/>
            <person name="Marchionni L."/>
            <person name="Matsuda H."/>
            <person name="Matsuzawa S."/>
            <person name="Miki H."/>
            <person name="Mignone F."/>
            <person name="Miyake S."/>
            <person name="Morris K."/>
            <person name="Mottagui-Tabar S."/>
            <person name="Mulder N."/>
            <person name="Nakano N."/>
            <person name="Nakauchi H."/>
            <person name="Ng P."/>
            <person name="Nilsson R."/>
            <person name="Nishiguchi S."/>
            <person name="Nishikawa S."/>
            <person name="Nori F."/>
            <person name="Ohara O."/>
            <person name="Okazaki Y."/>
            <person name="Orlando V."/>
            <person name="Pang K.C."/>
            <person name="Pavan W.J."/>
            <person name="Pavesi G."/>
            <person name="Pesole G."/>
            <person name="Petrovsky N."/>
            <person name="Piazza S."/>
            <person name="Reed J."/>
            <person name="Reid J.F."/>
            <person name="Ring B.Z."/>
            <person name="Ringwald M."/>
            <person name="Rost B."/>
            <person name="Ruan Y."/>
            <person name="Salzberg S.L."/>
            <person name="Sandelin A."/>
            <person name="Schneider C."/>
            <person name="Schoenbach C."/>
            <person name="Sekiguchi K."/>
            <person name="Semple C.A."/>
            <person name="Seno S."/>
            <person name="Sessa L."/>
            <person name="Sheng Y."/>
            <person name="Shibata Y."/>
            <person name="Shimada H."/>
            <person name="Shimada K."/>
            <person name="Silva D."/>
            <person name="Sinclair B."/>
            <person name="Sperling S."/>
            <person name="Stupka E."/>
            <person name="Sugiura K."/>
            <person name="Sultana R."/>
            <person name="Takenaka Y."/>
            <person name="Taki K."/>
            <person name="Tammoja K."/>
            <person name="Tan S.L."/>
            <person name="Tang S."/>
            <person name="Taylor M.S."/>
            <person name="Tegner J."/>
            <person name="Teichmann S.A."/>
            <person name="Ueda H.R."/>
            <person name="van Nimwegen E."/>
            <person name="Verardo R."/>
            <person name="Wei C.L."/>
            <person name="Yagi K."/>
            <person name="Yamanishi H."/>
            <person name="Zabarovsky E."/>
            <person name="Zhu S."/>
            <person name="Zimmer A."/>
            <person name="Hide W."/>
            <person name="Bult C."/>
            <person name="Grimmond S.M."/>
            <person name="Teasdale R.D."/>
            <person name="Liu E.T."/>
            <person name="Brusic V."/>
            <person name="Quackenbush J."/>
            <person name="Wahlestedt C."/>
            <person name="Mattick J.S."/>
            <person name="Hume D.A."/>
            <person name="Kai C."/>
            <person name="Sasaki D."/>
            <person name="Tomaru Y."/>
            <person name="Fukuda S."/>
            <person name="Kanamori-Katayama M."/>
            <person name="Suzuki M."/>
            <person name="Aoki J."/>
            <person name="Arakawa T."/>
            <person name="Iida J."/>
            <person name="Imamura K."/>
            <person name="Itoh M."/>
            <person name="Kato T."/>
            <person name="Kawaji H."/>
            <person name="Kawagashira N."/>
            <person name="Kawashima T."/>
            <person name="Kojima M."/>
            <person name="Kondo S."/>
            <person name="Konno H."/>
            <person name="Nakano K."/>
            <person name="Ninomiya N."/>
            <person name="Nishio T."/>
            <person name="Okada M."/>
            <person name="Plessy C."/>
            <person name="Shibata K."/>
            <person name="Shiraki T."/>
            <person name="Suzuki S."/>
            <person name="Tagami M."/>
            <person name="Waki K."/>
            <person name="Watahiki A."/>
            <person name="Okamura-Oho Y."/>
            <person name="Suzuki H."/>
            <person name="Kawai J."/>
            <person name="Hayashizaki Y."/>
        </authorList>
    </citation>
    <scope>NUCLEOTIDE SEQUENCE [LARGE SCALE MRNA] (ISOFORMS 1; 2 AND 3)</scope>
    <source>
        <strain>C57BL/6J</strain>
        <strain>NOD</strain>
        <tissue>Amnion</tissue>
        <tissue>Aorta</tissue>
        <tissue>Egg</tissue>
        <tissue>Spleen</tissue>
        <tissue>Thymus</tissue>
        <tissue>Tongue</tissue>
        <tissue>Vein</tissue>
    </source>
</reference>
<reference key="2">
    <citation type="journal article" date="2004" name="Genome Res.">
        <title>The status, quality, and expansion of the NIH full-length cDNA project: the Mammalian Gene Collection (MGC).</title>
        <authorList>
            <consortium name="The MGC Project Team"/>
        </authorList>
    </citation>
    <scope>NUCLEOTIDE SEQUENCE [LARGE SCALE MRNA] (ISOFORM 1)</scope>
    <source>
        <strain>C57BL/6J</strain>
        <tissue>Brain</tissue>
    </source>
</reference>
<reference key="3">
    <citation type="journal article" date="2006" name="Biochim. Biophys. Acta">
        <title>An ascorbate-reducible cytochrome b561 is localized in macrophage lysosomes.</title>
        <authorList>
            <person name="Zhang D.-L."/>
            <person name="Su D."/>
            <person name="Berczi A."/>
            <person name="Vargas A."/>
            <person name="Asard H."/>
        </authorList>
    </citation>
    <scope>SUBCELLULAR LOCATION</scope>
    <scope>GLYCOSYLATION</scope>
    <scope>TISSUE SPECIFICITY</scope>
    <scope>DEVELOPMENTAL STAGE</scope>
</reference>
<reference key="4">
    <citation type="journal article" date="2006" name="FEBS J.">
        <title>Three mammalian cytochromes b561 are ascorbate-dependent ferrireductases.</title>
        <authorList>
            <person name="Su D."/>
            <person name="Asard H."/>
        </authorList>
    </citation>
    <scope>FUNCTION</scope>
    <scope>CATALYTIC ACTIVITY</scope>
    <scope>MUTAGENESIS OF ASP-38; PHE-44; HIS-47; PRO-48; MET-51; TYR-66; ARG-67; HIS-83; HIS-105; ASN-106; HIS-112; SER-115; HIS-117; SER-118; TRP-119; GLN-131; ARG-149; HIS-156; GLU-177; TYR-190 AND GLU-196</scope>
</reference>
<evidence type="ECO:0000250" key="1">
    <source>
        <dbReference type="UniProtKB" id="Q53TN4"/>
    </source>
</evidence>
<evidence type="ECO:0000255" key="2"/>
<evidence type="ECO:0000255" key="3">
    <source>
        <dbReference type="PROSITE-ProRule" id="PRU00242"/>
    </source>
</evidence>
<evidence type="ECO:0000269" key="4">
    <source>
    </source>
</evidence>
<evidence type="ECO:0000269" key="5">
    <source>
    </source>
</evidence>
<evidence type="ECO:0000303" key="6">
    <source>
    </source>
</evidence>
<evidence type="ECO:0000303" key="7">
    <source>
    </source>
</evidence>
<evidence type="ECO:0000305" key="8">
    <source>
    </source>
</evidence>
<evidence type="ECO:0000305" key="9">
    <source>
    </source>
</evidence>
<evidence type="ECO:0000312" key="10">
    <source>
        <dbReference type="MGI" id="MGI:2686925"/>
    </source>
</evidence>
<sequence>MASGWFYLSCMVLGSLGSMCILFTAYWMQYWRGGFAWDGTVLMFNWHPVLMVAGMVVLYGAASLVYRLPSSWVGPRLPWKVLHAALHLLAFTCTVVGLIAVFRFHNHSRIAHLYSLHSWLGITTVVLFACQWFLGFAVFLLPWASQWLRSLLKPLHVFFGACILSLSITSVISGINEKLFFVLKNATKPYSSLPGEAVFANSTGLLVVAFGLLVLYVLLASSWKRPDPGALTDRQPLLHDRE</sequence>
<organism>
    <name type="scientific">Mus musculus</name>
    <name type="common">Mouse</name>
    <dbReference type="NCBI Taxonomy" id="10090"/>
    <lineage>
        <taxon>Eukaryota</taxon>
        <taxon>Metazoa</taxon>
        <taxon>Chordata</taxon>
        <taxon>Craniata</taxon>
        <taxon>Vertebrata</taxon>
        <taxon>Euteleostomi</taxon>
        <taxon>Mammalia</taxon>
        <taxon>Eutheria</taxon>
        <taxon>Euarchontoglires</taxon>
        <taxon>Glires</taxon>
        <taxon>Rodentia</taxon>
        <taxon>Myomorpha</taxon>
        <taxon>Muroidea</taxon>
        <taxon>Muridae</taxon>
        <taxon>Murinae</taxon>
        <taxon>Mus</taxon>
        <taxon>Mus</taxon>
    </lineage>
</organism>
<keyword id="KW-0025">Alternative splicing</keyword>
<keyword id="KW-0249">Electron transport</keyword>
<keyword id="KW-0967">Endosome</keyword>
<keyword id="KW-0325">Glycoprotein</keyword>
<keyword id="KW-0349">Heme</keyword>
<keyword id="KW-0408">Iron</keyword>
<keyword id="KW-0458">Lysosome</keyword>
<keyword id="KW-0472">Membrane</keyword>
<keyword id="KW-0479">Metal-binding</keyword>
<keyword id="KW-0560">Oxidoreductase</keyword>
<keyword id="KW-1185">Reference proteome</keyword>
<keyword id="KW-1278">Translocase</keyword>
<keyword id="KW-0812">Transmembrane</keyword>
<keyword id="KW-1133">Transmembrane helix</keyword>
<keyword id="KW-0813">Transport</keyword>
<protein>
    <recommendedName>
        <fullName evidence="8 9">Lysosomal membrane ascorbate-dependent ferrireductase CYB561A3</fullName>
        <ecNumber evidence="4">7.2.1.3</ecNumber>
    </recommendedName>
    <alternativeName>
        <fullName evidence="10">Cytochrome b ascorbate-dependent protein 3</fullName>
    </alternativeName>
    <alternativeName>
        <fullName evidence="10">Cytochrome b561 family member A3</fullName>
    </alternativeName>
    <alternativeName>
        <fullName evidence="7">Lysosomal cytochrome b</fullName>
        <shortName evidence="7">LCytb</shortName>
    </alternativeName>
</protein>
<proteinExistence type="evidence at protein level"/>